<organism>
    <name type="scientific">Trichormus variabilis (strain ATCC 29413 / PCC 7937)</name>
    <name type="common">Anabaena variabilis</name>
    <dbReference type="NCBI Taxonomy" id="240292"/>
    <lineage>
        <taxon>Bacteria</taxon>
        <taxon>Bacillati</taxon>
        <taxon>Cyanobacteriota</taxon>
        <taxon>Cyanophyceae</taxon>
        <taxon>Nostocales</taxon>
        <taxon>Nostocaceae</taxon>
        <taxon>Trichormus</taxon>
    </lineage>
</organism>
<sequence>MVIVKSWQKIFALLVVLLLCIGCSKVPSTSYNPWAVVSLPTEAKLLDIAFTENPQHGFLVGSNATLLETNDGGNNWQPLNLALDDDRYRFDSVSFAGKEGWIAGEPSLLLHTTDEGRSWSRIPLSEKLPGNPIAIQALGTDIAEMATDVGAIYKTTDGGKNWKAQVEAAVGVVRNLERSEDGKYVAVSAKGSFYSTWEPGQNAWVPHNRNSSRRVENMGFSQDGLWLLARGGQVQFSDPTKPDEWLDAQTPELATSWGLLDMAYRTPNEVWIGGGSGNLLVSTDGGKTWEKDRDVEEVAANFYKVVFLKPDQGFVIGDRGVLLKYQPEAAKTATTEPAA</sequence>
<keyword id="KW-0449">Lipoprotein</keyword>
<keyword id="KW-0472">Membrane</keyword>
<keyword id="KW-0564">Palmitate</keyword>
<keyword id="KW-0602">Photosynthesis</keyword>
<keyword id="KW-0604">Photosystem II</keyword>
<keyword id="KW-0732">Signal</keyword>
<keyword id="KW-0793">Thylakoid</keyword>
<accession>Q3MC08</accession>
<dbReference type="EMBL" id="CP000117">
    <property type="protein sequence ID" value="ABA21478.1"/>
    <property type="molecule type" value="Genomic_DNA"/>
</dbReference>
<dbReference type="SMR" id="Q3MC08"/>
<dbReference type="STRING" id="240292.Ava_1856"/>
<dbReference type="KEGG" id="ava:Ava_1856"/>
<dbReference type="eggNOG" id="COG4447">
    <property type="taxonomic scope" value="Bacteria"/>
</dbReference>
<dbReference type="HOGENOM" id="CLU_057027_0_0_3"/>
<dbReference type="Proteomes" id="UP000002533">
    <property type="component" value="Chromosome"/>
</dbReference>
<dbReference type="GO" id="GO:0009523">
    <property type="term" value="C:photosystem II"/>
    <property type="evidence" value="ECO:0007669"/>
    <property type="project" value="UniProtKB-KW"/>
</dbReference>
<dbReference type="GO" id="GO:0031676">
    <property type="term" value="C:plasma membrane-derived thylakoid membrane"/>
    <property type="evidence" value="ECO:0007669"/>
    <property type="project" value="UniProtKB-SubCell"/>
</dbReference>
<dbReference type="GO" id="GO:0031977">
    <property type="term" value="C:thylakoid lumen"/>
    <property type="evidence" value="ECO:0007669"/>
    <property type="project" value="UniProtKB-UniRule"/>
</dbReference>
<dbReference type="GO" id="GO:0015979">
    <property type="term" value="P:photosynthesis"/>
    <property type="evidence" value="ECO:0007669"/>
    <property type="project" value="UniProtKB-KW"/>
</dbReference>
<dbReference type="Gene3D" id="2.130.10.10">
    <property type="entry name" value="YVTN repeat-like/Quinoprotein amine dehydrogenase"/>
    <property type="match status" value="2"/>
</dbReference>
<dbReference type="HAMAP" id="MF_01348">
    <property type="entry name" value="Ycf48"/>
    <property type="match status" value="1"/>
</dbReference>
<dbReference type="InterPro" id="IPR028203">
    <property type="entry name" value="PSII_CF48-like_dom"/>
</dbReference>
<dbReference type="InterPro" id="IPR015943">
    <property type="entry name" value="WD40/YVTN_repeat-like_dom_sf"/>
</dbReference>
<dbReference type="InterPro" id="IPR016705">
    <property type="entry name" value="Ycf48/Hcf136"/>
</dbReference>
<dbReference type="NCBIfam" id="NF010237">
    <property type="entry name" value="PRK13684.1"/>
    <property type="match status" value="1"/>
</dbReference>
<dbReference type="PANTHER" id="PTHR47199">
    <property type="entry name" value="PHOTOSYSTEM II STABILITY/ASSEMBLY FACTOR HCF136, CHLOROPLASTIC"/>
    <property type="match status" value="1"/>
</dbReference>
<dbReference type="PANTHER" id="PTHR47199:SF2">
    <property type="entry name" value="PHOTOSYSTEM II STABILITY_ASSEMBLY FACTOR HCF136, CHLOROPLASTIC"/>
    <property type="match status" value="1"/>
</dbReference>
<dbReference type="Pfam" id="PF14870">
    <property type="entry name" value="PSII_BNR"/>
    <property type="match status" value="1"/>
</dbReference>
<dbReference type="PIRSF" id="PIRSF017875">
    <property type="entry name" value="PSII_HCF136"/>
    <property type="match status" value="1"/>
</dbReference>
<dbReference type="SUPFAM" id="SSF110296">
    <property type="entry name" value="Oligoxyloglucan reducing end-specific cellobiohydrolase"/>
    <property type="match status" value="1"/>
</dbReference>
<reference key="1">
    <citation type="journal article" date="2014" name="Stand. Genomic Sci.">
        <title>Complete genome sequence of Anabaena variabilis ATCC 29413.</title>
        <authorList>
            <person name="Thiel T."/>
            <person name="Pratte B.S."/>
            <person name="Zhong J."/>
            <person name="Goodwin L."/>
            <person name="Copeland A."/>
            <person name="Lucas S."/>
            <person name="Han C."/>
            <person name="Pitluck S."/>
            <person name="Land M.L."/>
            <person name="Kyrpides N.C."/>
            <person name="Woyke T."/>
        </authorList>
    </citation>
    <scope>NUCLEOTIDE SEQUENCE [LARGE SCALE GENOMIC DNA]</scope>
    <source>
        <strain>ATCC 29413 / PCC 7937</strain>
    </source>
</reference>
<protein>
    <recommendedName>
        <fullName evidence="2">Photosystem II assembly lipoprotein Ycf48</fullName>
    </recommendedName>
</protein>
<comment type="function">
    <text evidence="2">A factor required for optimal assembly of photosystem II (PSII), acting in the early stages of PSII assembly. Also plays a role in replacement of photodamaged D1 (psbA). Assists YidC in synthesis of chlorophyll-binding proteins.</text>
</comment>
<comment type="subunit">
    <text evidence="2">Part of early PSII assembly complexes which includes D1 (psbA) and PsbI; not found in mature PSII. Binds to the lumenal side of PSII complexes. Interacts with YidC.</text>
</comment>
<comment type="subcellular location">
    <subcellularLocation>
        <location evidence="1">Cellular thylakoid membrane</location>
        <topology evidence="1">Lipid-anchor</topology>
        <orientation evidence="1">Lumenal side</orientation>
    </subcellularLocation>
    <text evidence="2">Associated with a PSII precusor complex on the lumenal side of the thylakoid membrane.</text>
</comment>
<comment type="domain">
    <text evidence="2">A 7-bladed beta-propeller torus, about 55 by 55 Angstroms, with a depth of about 25 Angstroms and a central pore.</text>
</comment>
<comment type="similarity">
    <text evidence="2">Belongs to the Ycf48 family.</text>
</comment>
<proteinExistence type="inferred from homology"/>
<name>YCF48_TRIV2</name>
<gene>
    <name evidence="2" type="primary">ycf48</name>
    <name type="ordered locus">Ava_1856</name>
</gene>
<feature type="signal peptide" evidence="2">
    <location>
        <begin position="1"/>
        <end position="22"/>
    </location>
</feature>
<feature type="chain" id="PRO_0000239674" description="Photosystem II assembly lipoprotein Ycf48" evidence="2">
    <location>
        <begin position="23"/>
        <end position="339"/>
    </location>
</feature>
<feature type="lipid moiety-binding region" description="N-palmitoyl cysteine" evidence="1">
    <location>
        <position position="23"/>
    </location>
</feature>
<feature type="lipid moiety-binding region" description="S-diacylglycerol cysteine" evidence="1">
    <location>
        <position position="23"/>
    </location>
</feature>
<evidence type="ECO:0000250" key="1">
    <source>
        <dbReference type="UniProtKB" id="P73069"/>
    </source>
</evidence>
<evidence type="ECO:0000255" key="2">
    <source>
        <dbReference type="HAMAP-Rule" id="MF_01348"/>
    </source>
</evidence>